<accession>Q6NRW0</accession>
<name>MTBP_XENLA</name>
<feature type="chain" id="PRO_0000323747" description="Mdm2-binding protein">
    <location>
        <begin position="1"/>
        <end position="860"/>
    </location>
</feature>
<feature type="region of interest" description="Disordered" evidence="2">
    <location>
        <begin position="671"/>
        <end position="788"/>
    </location>
</feature>
<feature type="compositionally biased region" description="Low complexity" evidence="2">
    <location>
        <begin position="717"/>
        <end position="731"/>
    </location>
</feature>
<feature type="compositionally biased region" description="Polar residues" evidence="2">
    <location>
        <begin position="732"/>
        <end position="758"/>
    </location>
</feature>
<feature type="compositionally biased region" description="Basic and acidic residues" evidence="2">
    <location>
        <begin position="772"/>
        <end position="788"/>
    </location>
</feature>
<protein>
    <recommendedName>
        <fullName>Mdm2-binding protein</fullName>
    </recommendedName>
</protein>
<gene>
    <name type="primary">mtbp</name>
</gene>
<reference key="1">
    <citation type="submission" date="2004-05" db="EMBL/GenBank/DDBJ databases">
        <authorList>
            <consortium name="NIH - Xenopus Gene Collection (XGC) project"/>
        </authorList>
    </citation>
    <scope>NUCLEOTIDE SEQUENCE [LARGE SCALE MRNA]</scope>
    <source>
        <tissue>Embryo</tissue>
    </source>
</reference>
<keyword id="KW-0131">Cell cycle</keyword>
<keyword id="KW-0338">Growth arrest</keyword>
<keyword id="KW-1185">Reference proteome</keyword>
<keyword id="KW-0833">Ubl conjugation pathway</keyword>
<evidence type="ECO:0000250" key="1"/>
<evidence type="ECO:0000256" key="2">
    <source>
        <dbReference type="SAM" id="MobiDB-lite"/>
    </source>
</evidence>
<evidence type="ECO:0000305" key="3"/>
<comment type="function">
    <text evidence="1">May play a role in mdm2-dependent p53/TP53 homeostasis in unstressed cells. Inhibits autoubiquitination of mdm2, thereby enhancing mdm2 stability. This promotes mdm2-mediated ubiquitination of p53/TP53 and its subsequent degradation (By similarity).</text>
</comment>
<comment type="similarity">
    <text evidence="3">Belongs to the MTBP family.</text>
</comment>
<sequence length="860" mass="96308">MERFVLCIHWERRAEQQQPVPQGLVYAQDIYTQLKEYSTNCTSTFPACSLTGNPGIRKWFFALQSLYGFSQFCSSDWEDLCPAVTTDDSEEPVQTALDECLDALQFPDGEDDNSRDSISQTNLFEEAAELLHQLSDKLPAPGRALVDVLLFPSEAPKLKDCLSAIGAIKHLKEWHTAKITIVSKDCKGWQKIGKFLSANVVVSDCPRQLIDPQELWRGTIEIKERKFTSEVEFPEFCLRSVSDDKVPYFENNGDDKNKTVLSEVFHYYGASLEYVQMVALSEIPSYFVSDSVFELSITRNGLQGKSKLMLDQLCSLTEKVGAIFMLPCNVCSLPNPPALQRSSKKWREYMSRKPKDIKVPGVELKGEYCSYYFLIQGKGSGLCKATLLHSASQISGAASLLLLHQRLNNNHPVNMAESTSDILDSLPHFNGEQIALREQILARAQVLAVKEYLKRQEAQPHASVSQSNNLGRLLALTREHVIGDCESRLDSVSYKNMQNITVSTPAFPESEAMISNPADWPERNVLQNLENFEKIKQRLRASILSGSAEQLLGRKDGLKEGMTLLDAKELLKYFTPQGLAVGELQPLQVQRGDNAFLVTPKLTPRKLKGLPFEKAAECHYHGLEYCLDNRKALDRDVAFSELQSRLIRYETQTTCTRECCPIPFALSPIPSPAVLSEPGSVPDGESIQTELRGDPLRLKRRSKDIEGLYPSKRLAKSGSSDSLVSLASEGSGHQQPTRLRTERTASSVSGAQPSSTRVRTAPSVPAQSKPSSHLELEQKESRSQKHNRMLKEVVSKTLQKHSIGVEHPCYAACNQRLFEISKFFLKDLKTSRGLLDEMKKAASNNAKQVIQWELDKLKKN</sequence>
<proteinExistence type="evidence at transcript level"/>
<dbReference type="EMBL" id="BC070600">
    <property type="protein sequence ID" value="AAH70600.1"/>
    <property type="molecule type" value="mRNA"/>
</dbReference>
<dbReference type="RefSeq" id="NP_001084870.1">
    <property type="nucleotide sequence ID" value="NM_001091401.1"/>
</dbReference>
<dbReference type="DNASU" id="431919"/>
<dbReference type="GeneID" id="431919"/>
<dbReference type="KEGG" id="xla:431919"/>
<dbReference type="AGR" id="Xenbase:XB-GENE-990926"/>
<dbReference type="CTD" id="431919"/>
<dbReference type="Xenbase" id="XB-GENE-990926">
    <property type="gene designation" value="mtbp.S"/>
</dbReference>
<dbReference type="OrthoDB" id="8633268at2759"/>
<dbReference type="Proteomes" id="UP000186698">
    <property type="component" value="Chromosome 6S"/>
</dbReference>
<dbReference type="Bgee" id="431919">
    <property type="expression patterns" value="Expressed in egg cell and 19 other cell types or tissues"/>
</dbReference>
<dbReference type="GO" id="GO:0000776">
    <property type="term" value="C:kinetochore"/>
    <property type="evidence" value="ECO:0000318"/>
    <property type="project" value="GO_Central"/>
</dbReference>
<dbReference type="GO" id="GO:0034501">
    <property type="term" value="P:protein localization to kinetochore"/>
    <property type="evidence" value="ECO:0000318"/>
    <property type="project" value="GO_Central"/>
</dbReference>
<dbReference type="GO" id="GO:0031396">
    <property type="term" value="P:regulation of protein ubiquitination"/>
    <property type="evidence" value="ECO:0007669"/>
    <property type="project" value="InterPro"/>
</dbReference>
<dbReference type="GO" id="GO:0007089">
    <property type="term" value="P:traversing start control point of mitotic cell cycle"/>
    <property type="evidence" value="ECO:0000318"/>
    <property type="project" value="GO_Central"/>
</dbReference>
<dbReference type="InterPro" id="IPR039061">
    <property type="entry name" value="MTBP"/>
</dbReference>
<dbReference type="InterPro" id="IPR029418">
    <property type="entry name" value="MTBP_C"/>
</dbReference>
<dbReference type="InterPro" id="IPR029420">
    <property type="entry name" value="MTBP_central"/>
</dbReference>
<dbReference type="InterPro" id="IPR029421">
    <property type="entry name" value="MTBP_N"/>
</dbReference>
<dbReference type="PANTHER" id="PTHR14382">
    <property type="entry name" value="MDM2-BINDING PROTEIN"/>
    <property type="match status" value="1"/>
</dbReference>
<dbReference type="PANTHER" id="PTHR14382:SF1">
    <property type="entry name" value="MDM2-BINDING PROTEIN"/>
    <property type="match status" value="1"/>
</dbReference>
<dbReference type="Pfam" id="PF14920">
    <property type="entry name" value="MTBP_C"/>
    <property type="match status" value="1"/>
</dbReference>
<dbReference type="Pfam" id="PF14919">
    <property type="entry name" value="MTBP_mid"/>
    <property type="match status" value="1"/>
</dbReference>
<dbReference type="Pfam" id="PF14918">
    <property type="entry name" value="MTBP_N"/>
    <property type="match status" value="1"/>
</dbReference>
<organism>
    <name type="scientific">Xenopus laevis</name>
    <name type="common">African clawed frog</name>
    <dbReference type="NCBI Taxonomy" id="8355"/>
    <lineage>
        <taxon>Eukaryota</taxon>
        <taxon>Metazoa</taxon>
        <taxon>Chordata</taxon>
        <taxon>Craniata</taxon>
        <taxon>Vertebrata</taxon>
        <taxon>Euteleostomi</taxon>
        <taxon>Amphibia</taxon>
        <taxon>Batrachia</taxon>
        <taxon>Anura</taxon>
        <taxon>Pipoidea</taxon>
        <taxon>Pipidae</taxon>
        <taxon>Xenopodinae</taxon>
        <taxon>Xenopus</taxon>
        <taxon>Xenopus</taxon>
    </lineage>
</organism>